<evidence type="ECO:0000250" key="1"/>
<evidence type="ECO:0000255" key="2"/>
<sequence length="109" mass="11864">MKLSIIIIATSLVIAVVAFPSKDSKAIENDKTEQRMEIVVQETARACSKQIGDKCKRNCECCGKTVVCGTIYVGGKEVNQCMDKTSDNAILNGLGKGMNFMENTFSFCV</sequence>
<protein>
    <recommendedName>
        <fullName>Hainantoxin-XVIII-7</fullName>
        <shortName>HNTX-XVIII-7</shortName>
    </recommendedName>
</protein>
<accession>D2Y2P1</accession>
<organism>
    <name type="scientific">Cyriopagopus hainanus</name>
    <name type="common">Chinese bird spider</name>
    <name type="synonym">Haplopelma hainanum</name>
    <dbReference type="NCBI Taxonomy" id="209901"/>
    <lineage>
        <taxon>Eukaryota</taxon>
        <taxon>Metazoa</taxon>
        <taxon>Ecdysozoa</taxon>
        <taxon>Arthropoda</taxon>
        <taxon>Chelicerata</taxon>
        <taxon>Arachnida</taxon>
        <taxon>Araneae</taxon>
        <taxon>Mygalomorphae</taxon>
        <taxon>Theraphosidae</taxon>
        <taxon>Haplopelma</taxon>
    </lineage>
</organism>
<keyword id="KW-1015">Disulfide bond</keyword>
<keyword id="KW-0872">Ion channel impairing toxin</keyword>
<keyword id="KW-0960">Knottin</keyword>
<keyword id="KW-0964">Secreted</keyword>
<keyword id="KW-0732">Signal</keyword>
<keyword id="KW-0800">Toxin</keyword>
<feature type="signal peptide" evidence="2">
    <location>
        <begin position="1"/>
        <end position="18"/>
    </location>
</feature>
<feature type="propeptide" id="PRO_0000401049" evidence="1">
    <location>
        <begin position="19"/>
        <end position="46"/>
    </location>
</feature>
<feature type="peptide" id="PRO_0000401050" description="Hainantoxin-XVIII-7">
    <location>
        <begin position="47"/>
        <end position="109"/>
    </location>
</feature>
<feature type="disulfide bond" evidence="1">
    <location>
        <begin position="47"/>
        <end position="62"/>
    </location>
</feature>
<feature type="disulfide bond" evidence="1">
    <location>
        <begin position="55"/>
        <end position="68"/>
    </location>
</feature>
<feature type="disulfide bond" evidence="1">
    <location>
        <begin position="59"/>
        <end position="108"/>
    </location>
</feature>
<feature type="disulfide bond" evidence="1">
    <location>
        <begin position="61"/>
        <end position="81"/>
    </location>
</feature>
<proteinExistence type="inferred from homology"/>
<comment type="function">
    <text>Putative ion channel inhibitor.</text>
</comment>
<comment type="subcellular location">
    <subcellularLocation>
        <location evidence="1">Secreted</location>
    </subcellularLocation>
</comment>
<comment type="tissue specificity">
    <text>Expressed by the venom gland.</text>
</comment>
<comment type="domain">
    <text evidence="1">The presence of a 'disulfide through disulfide knot' structurally defines this protein as a knottin.</text>
</comment>
<comment type="similarity">
    <text>Belongs to the neurotoxin 25 family. F7 subfamily.</text>
</comment>
<name>H18G1_CYRHA</name>
<reference key="1">
    <citation type="journal article" date="2010" name="J. Proteome Res.">
        <title>Molecular diversification of peptide toxins from the tarantula Haplopelma hainanum (Ornithoctonus hainana) venom based on transcriptomic, peptidomic, and genomic analyses.</title>
        <authorList>
            <person name="Tang X."/>
            <person name="Zhang Y."/>
            <person name="Hu W."/>
            <person name="Xu D."/>
            <person name="Tao H."/>
            <person name="Yang X."/>
            <person name="Li Y."/>
            <person name="Jiang L."/>
            <person name="Liang S."/>
        </authorList>
    </citation>
    <scope>NUCLEOTIDE SEQUENCE [LARGE SCALE GENOMIC DNA]</scope>
    <source>
        <tissue>Venom gland</tissue>
    </source>
</reference>
<dbReference type="EMBL" id="GU293118">
    <property type="protein sequence ID" value="ADB56934.1"/>
    <property type="molecule type" value="Genomic_DNA"/>
</dbReference>
<dbReference type="ArachnoServer" id="AS002012">
    <property type="toxin name" value="U14-theraphotoxin-Hhn1g"/>
</dbReference>
<dbReference type="GO" id="GO:0005576">
    <property type="term" value="C:extracellular region"/>
    <property type="evidence" value="ECO:0007669"/>
    <property type="project" value="UniProtKB-SubCell"/>
</dbReference>
<dbReference type="GO" id="GO:0099106">
    <property type="term" value="F:ion channel regulator activity"/>
    <property type="evidence" value="ECO:0007669"/>
    <property type="project" value="UniProtKB-KW"/>
</dbReference>
<dbReference type="GO" id="GO:0090729">
    <property type="term" value="F:toxin activity"/>
    <property type="evidence" value="ECO:0007669"/>
    <property type="project" value="UniProtKB-KW"/>
</dbReference>